<organism>
    <name type="scientific">Brevibacillus brevis (strain 47 / JCM 6285 / NBRC 100599)</name>
    <dbReference type="NCBI Taxonomy" id="358681"/>
    <lineage>
        <taxon>Bacteria</taxon>
        <taxon>Bacillati</taxon>
        <taxon>Bacillota</taxon>
        <taxon>Bacilli</taxon>
        <taxon>Bacillales</taxon>
        <taxon>Paenibacillaceae</taxon>
        <taxon>Brevibacillus</taxon>
    </lineage>
</organism>
<gene>
    <name evidence="1" type="primary">rplL</name>
    <name type="ordered locus">BBR47_02090</name>
</gene>
<protein>
    <recommendedName>
        <fullName evidence="1">Large ribosomal subunit protein bL12</fullName>
    </recommendedName>
    <alternativeName>
        <fullName evidence="2">50S ribosomal protein L7/L12</fullName>
    </alternativeName>
</protein>
<sequence length="120" mass="12403">MSKDQILEAIKGMSVLELNDLVKAIEEEFGVTAAAPVAVVAGGGAEAAAEQTEFTVNLVSGGASKINVIKVVRELTGLGLKEAKDLVDNAPKTLKEGVSKDEAEALKAKLEEAGAQVEVK</sequence>
<accession>C0ZIG8</accession>
<keyword id="KW-1185">Reference proteome</keyword>
<keyword id="KW-0687">Ribonucleoprotein</keyword>
<keyword id="KW-0689">Ribosomal protein</keyword>
<proteinExistence type="inferred from homology"/>
<name>RL7_BREBN</name>
<reference key="1">
    <citation type="submission" date="2005-03" db="EMBL/GenBank/DDBJ databases">
        <title>Brevibacillus brevis strain 47, complete genome.</title>
        <authorList>
            <person name="Hosoyama A."/>
            <person name="Yamada R."/>
            <person name="Hongo Y."/>
            <person name="Terui Y."/>
            <person name="Ankai A."/>
            <person name="Masuyama W."/>
            <person name="Sekiguchi M."/>
            <person name="Takeda T."/>
            <person name="Asano K."/>
            <person name="Ohji S."/>
            <person name="Ichikawa N."/>
            <person name="Narita S."/>
            <person name="Aoki N."/>
            <person name="Miura H."/>
            <person name="Matsushita S."/>
            <person name="Sekigawa T."/>
            <person name="Yamagata H."/>
            <person name="Yoshikawa H."/>
            <person name="Udaka S."/>
            <person name="Tanikawa S."/>
            <person name="Fujita N."/>
        </authorList>
    </citation>
    <scope>NUCLEOTIDE SEQUENCE [LARGE SCALE GENOMIC DNA]</scope>
    <source>
        <strain>47 / JCM 6285 / NBRC 100599</strain>
    </source>
</reference>
<comment type="function">
    <text evidence="1">Forms part of the ribosomal stalk which helps the ribosome interact with GTP-bound translation factors. Is thus essential for accurate translation.</text>
</comment>
<comment type="subunit">
    <text evidence="1">Homodimer. Part of the ribosomal stalk of the 50S ribosomal subunit. Forms a multimeric L10(L12)X complex, where L10 forms an elongated spine to which 2 to 4 L12 dimers bind in a sequential fashion. Binds GTP-bound translation factors.</text>
</comment>
<comment type="similarity">
    <text evidence="1">Belongs to the bacterial ribosomal protein bL12 family.</text>
</comment>
<feature type="chain" id="PRO_1000195775" description="Large ribosomal subunit protein bL12">
    <location>
        <begin position="1"/>
        <end position="120"/>
    </location>
</feature>
<dbReference type="EMBL" id="AP008955">
    <property type="protein sequence ID" value="BAH41186.1"/>
    <property type="molecule type" value="Genomic_DNA"/>
</dbReference>
<dbReference type="RefSeq" id="WP_007716218.1">
    <property type="nucleotide sequence ID" value="NC_012491.1"/>
</dbReference>
<dbReference type="SMR" id="C0ZIG8"/>
<dbReference type="STRING" id="358681.BBR47_02090"/>
<dbReference type="GeneID" id="95752127"/>
<dbReference type="KEGG" id="bbe:BBR47_02090"/>
<dbReference type="eggNOG" id="COG0222">
    <property type="taxonomic scope" value="Bacteria"/>
</dbReference>
<dbReference type="HOGENOM" id="CLU_086499_3_2_9"/>
<dbReference type="Proteomes" id="UP000001877">
    <property type="component" value="Chromosome"/>
</dbReference>
<dbReference type="GO" id="GO:0022625">
    <property type="term" value="C:cytosolic large ribosomal subunit"/>
    <property type="evidence" value="ECO:0007669"/>
    <property type="project" value="TreeGrafter"/>
</dbReference>
<dbReference type="GO" id="GO:0003729">
    <property type="term" value="F:mRNA binding"/>
    <property type="evidence" value="ECO:0007669"/>
    <property type="project" value="TreeGrafter"/>
</dbReference>
<dbReference type="GO" id="GO:0003735">
    <property type="term" value="F:structural constituent of ribosome"/>
    <property type="evidence" value="ECO:0007669"/>
    <property type="project" value="InterPro"/>
</dbReference>
<dbReference type="GO" id="GO:0006412">
    <property type="term" value="P:translation"/>
    <property type="evidence" value="ECO:0007669"/>
    <property type="project" value="UniProtKB-UniRule"/>
</dbReference>
<dbReference type="CDD" id="cd00387">
    <property type="entry name" value="Ribosomal_L7_L12"/>
    <property type="match status" value="1"/>
</dbReference>
<dbReference type="FunFam" id="1.20.5.710:FF:000002">
    <property type="entry name" value="50S ribosomal protein L7/L12"/>
    <property type="match status" value="1"/>
</dbReference>
<dbReference type="FunFam" id="3.30.1390.10:FF:000001">
    <property type="entry name" value="50S ribosomal protein L7/L12"/>
    <property type="match status" value="1"/>
</dbReference>
<dbReference type="Gene3D" id="3.30.1390.10">
    <property type="match status" value="1"/>
</dbReference>
<dbReference type="Gene3D" id="1.20.5.710">
    <property type="entry name" value="Single helix bin"/>
    <property type="match status" value="1"/>
</dbReference>
<dbReference type="HAMAP" id="MF_00368">
    <property type="entry name" value="Ribosomal_bL12"/>
    <property type="match status" value="1"/>
</dbReference>
<dbReference type="InterPro" id="IPR000206">
    <property type="entry name" value="Ribosomal_bL12"/>
</dbReference>
<dbReference type="InterPro" id="IPR013823">
    <property type="entry name" value="Ribosomal_bL12_C"/>
</dbReference>
<dbReference type="InterPro" id="IPR014719">
    <property type="entry name" value="Ribosomal_bL12_C/ClpS-like"/>
</dbReference>
<dbReference type="InterPro" id="IPR008932">
    <property type="entry name" value="Ribosomal_bL12_oligo"/>
</dbReference>
<dbReference type="InterPro" id="IPR036235">
    <property type="entry name" value="Ribosomal_bL12_oligo_N_sf"/>
</dbReference>
<dbReference type="NCBIfam" id="TIGR00855">
    <property type="entry name" value="L12"/>
    <property type="match status" value="1"/>
</dbReference>
<dbReference type="PANTHER" id="PTHR45987">
    <property type="entry name" value="39S RIBOSOMAL PROTEIN L12"/>
    <property type="match status" value="1"/>
</dbReference>
<dbReference type="PANTHER" id="PTHR45987:SF4">
    <property type="entry name" value="LARGE RIBOSOMAL SUBUNIT PROTEIN BL12M"/>
    <property type="match status" value="1"/>
</dbReference>
<dbReference type="Pfam" id="PF00542">
    <property type="entry name" value="Ribosomal_L12"/>
    <property type="match status" value="1"/>
</dbReference>
<dbReference type="Pfam" id="PF16320">
    <property type="entry name" value="Ribosomal_L12_N"/>
    <property type="match status" value="1"/>
</dbReference>
<dbReference type="SUPFAM" id="SSF54736">
    <property type="entry name" value="ClpS-like"/>
    <property type="match status" value="1"/>
</dbReference>
<dbReference type="SUPFAM" id="SSF48300">
    <property type="entry name" value="Ribosomal protein L7/12, oligomerisation (N-terminal) domain"/>
    <property type="match status" value="1"/>
</dbReference>
<evidence type="ECO:0000255" key="1">
    <source>
        <dbReference type="HAMAP-Rule" id="MF_00368"/>
    </source>
</evidence>
<evidence type="ECO:0000305" key="2"/>